<feature type="signal peptide" evidence="3">
    <location>
        <begin position="1"/>
        <end position="24"/>
    </location>
</feature>
<feature type="chain" id="PRO_0000023426" description="Snake venom vascular endothelial growth factor toxin TfsvVEGF">
    <location>
        <begin position="25"/>
        <end position="146"/>
    </location>
</feature>
<feature type="region of interest" description="Disordered" evidence="4">
    <location>
        <begin position="118"/>
        <end position="146"/>
    </location>
</feature>
<feature type="compositionally biased region" description="Basic and acidic residues" evidence="4">
    <location>
        <begin position="118"/>
        <end position="139"/>
    </location>
</feature>
<feature type="modified residue" description="Pyrrolidone carboxylic acid" evidence="2">
    <location>
        <position position="25"/>
    </location>
</feature>
<feature type="disulfide bond" evidence="1">
    <location>
        <begin position="38"/>
        <end position="80"/>
    </location>
</feature>
<feature type="disulfide bond" description="Interchain (with C-72)" evidence="1">
    <location>
        <position position="63"/>
    </location>
</feature>
<feature type="disulfide bond" evidence="1">
    <location>
        <begin position="69"/>
        <end position="115"/>
    </location>
</feature>
<feature type="disulfide bond" description="Interchain (with C-63)" evidence="1">
    <location>
        <position position="72"/>
    </location>
</feature>
<feature type="disulfide bond" evidence="1">
    <location>
        <begin position="73"/>
        <end position="117"/>
    </location>
</feature>
<reference key="1">
    <citation type="journal article" date="2004" name="J. Biol. Chem.">
        <title>A novel snake venom vascular endothelial growth factor (VEGF) predominantly induces vascular permeability through preferential signaling via VEGF receptor-1.</title>
        <authorList>
            <person name="Takahashi H."/>
            <person name="Hattori S."/>
            <person name="Iwamatsu A."/>
            <person name="Takizawa H."/>
            <person name="Shibuya M."/>
        </authorList>
    </citation>
    <scope>NUCLEOTIDE SEQUENCE [MRNA]</scope>
    <scope>FUNCTION</scope>
    <scope>SUBUNIT</scope>
    <scope>INTERACTION WITH FLT1 AND KDR</scope>
    <scope>SUBCELLULAR LOCATION</scope>
    <source>
        <tissue>Venom gland</tissue>
    </source>
</reference>
<reference key="2">
    <citation type="journal article" date="2009" name="J. Biol. Chem.">
        <title>Snake venom vascular endothelial growth factors (VEGF-Fs) exclusively vary their structures and functions among species.</title>
        <authorList>
            <person name="Yamazaki Y."/>
            <person name="Matsunaga Y."/>
            <person name="Tokunaga Y."/>
            <person name="Obayashi S."/>
            <person name="Saito M."/>
            <person name="Morita T."/>
        </authorList>
    </citation>
    <scope>NUCLEOTIDE SEQUENCE [MRNA]</scope>
    <source>
        <tissue>Venom gland</tissue>
    </source>
</reference>
<reference key="3">
    <citation type="journal article" date="2013" name="BMC Genomics">
        <title>Quantitative high-throughput profiling of snake venom gland transcriptomes and proteomes (Ovophis okinavensis and Protobothrops flavoviridis).</title>
        <authorList>
            <person name="Aird S.D."/>
            <person name="Watanabe Y."/>
            <person name="Villar-Briones A."/>
            <person name="Roy M.C."/>
            <person name="Terada K."/>
            <person name="Mikheyev A.S."/>
        </authorList>
    </citation>
    <scope>NUCLEOTIDE SEQUENCE [MRNA]</scope>
    <source>
        <tissue>Venom gland</tissue>
    </source>
</reference>
<proteinExistence type="evidence at protein level"/>
<sequence>MAAYLLAVAILFCIQGWPSGTVQGQVMPFMEVYSRSACQTRETLVPILKEYPDEVSHLFKPSCVPVLRCGGCCSDESLTCTATGKHSVGREIMRVDPHKGTSKMEVMQFKEHTACECRPRSPGDVNNGKDKRNPEEGGPRARFPFV</sequence>
<organism>
    <name type="scientific">Protobothrops flavoviridis</name>
    <name type="common">Habu</name>
    <name type="synonym">Trimeresurus flavoviridis</name>
    <dbReference type="NCBI Taxonomy" id="88087"/>
    <lineage>
        <taxon>Eukaryota</taxon>
        <taxon>Metazoa</taxon>
        <taxon>Chordata</taxon>
        <taxon>Craniata</taxon>
        <taxon>Vertebrata</taxon>
        <taxon>Euteleostomi</taxon>
        <taxon>Lepidosauria</taxon>
        <taxon>Squamata</taxon>
        <taxon>Bifurcata</taxon>
        <taxon>Unidentata</taxon>
        <taxon>Episquamata</taxon>
        <taxon>Toxicofera</taxon>
        <taxon>Serpentes</taxon>
        <taxon>Colubroidea</taxon>
        <taxon>Viperidae</taxon>
        <taxon>Crotalinae</taxon>
        <taxon>Protobothrops</taxon>
    </lineage>
</organism>
<protein>
    <recommendedName>
        <fullName>Snake venom vascular endothelial growth factor toxin TfsvVEGF</fullName>
        <shortName>svVEGF</shortName>
    </recommendedName>
    <alternativeName>
        <fullName evidence="6">VEGF-F</fullName>
    </alternativeName>
</protein>
<name>TXVE_PROFL</name>
<dbReference type="EMBL" id="AB154417">
    <property type="protein sequence ID" value="BAD38844.1"/>
    <property type="molecule type" value="mRNA"/>
</dbReference>
<dbReference type="EMBL" id="FJ554640">
    <property type="protein sequence ID" value="ACN22043.1"/>
    <property type="molecule type" value="Genomic_DNA"/>
</dbReference>
<dbReference type="EMBL" id="AB848141">
    <property type="protein sequence ID" value="BAN82012.1"/>
    <property type="molecule type" value="mRNA"/>
</dbReference>
<dbReference type="EMBL" id="AB985235">
    <property type="protein sequence ID" value="BAP39960.1"/>
    <property type="molecule type" value="mRNA"/>
</dbReference>
<dbReference type="SMR" id="P67862"/>
<dbReference type="GO" id="GO:0005615">
    <property type="term" value="C:extracellular space"/>
    <property type="evidence" value="ECO:0007669"/>
    <property type="project" value="TreeGrafter"/>
</dbReference>
<dbReference type="GO" id="GO:0016020">
    <property type="term" value="C:membrane"/>
    <property type="evidence" value="ECO:0007669"/>
    <property type="project" value="InterPro"/>
</dbReference>
<dbReference type="GO" id="GO:0042056">
    <property type="term" value="F:chemoattractant activity"/>
    <property type="evidence" value="ECO:0007669"/>
    <property type="project" value="TreeGrafter"/>
</dbReference>
<dbReference type="GO" id="GO:0008083">
    <property type="term" value="F:growth factor activity"/>
    <property type="evidence" value="ECO:0007669"/>
    <property type="project" value="UniProtKB-KW"/>
</dbReference>
<dbReference type="GO" id="GO:0090729">
    <property type="term" value="F:toxin activity"/>
    <property type="evidence" value="ECO:0007669"/>
    <property type="project" value="UniProtKB-KW"/>
</dbReference>
<dbReference type="GO" id="GO:0005172">
    <property type="term" value="F:vascular endothelial growth factor receptor binding"/>
    <property type="evidence" value="ECO:0007669"/>
    <property type="project" value="TreeGrafter"/>
</dbReference>
<dbReference type="GO" id="GO:0050930">
    <property type="term" value="P:induction of positive chemotaxis"/>
    <property type="evidence" value="ECO:0007669"/>
    <property type="project" value="TreeGrafter"/>
</dbReference>
<dbReference type="GO" id="GO:0045766">
    <property type="term" value="P:positive regulation of angiogenesis"/>
    <property type="evidence" value="ECO:0007669"/>
    <property type="project" value="TreeGrafter"/>
</dbReference>
<dbReference type="GO" id="GO:0001938">
    <property type="term" value="P:positive regulation of endothelial cell proliferation"/>
    <property type="evidence" value="ECO:0007669"/>
    <property type="project" value="TreeGrafter"/>
</dbReference>
<dbReference type="GO" id="GO:0060754">
    <property type="term" value="P:positive regulation of mast cell chemotaxis"/>
    <property type="evidence" value="ECO:0007669"/>
    <property type="project" value="TreeGrafter"/>
</dbReference>
<dbReference type="GO" id="GO:0001666">
    <property type="term" value="P:response to hypoxia"/>
    <property type="evidence" value="ECO:0007669"/>
    <property type="project" value="TreeGrafter"/>
</dbReference>
<dbReference type="GO" id="GO:0002040">
    <property type="term" value="P:sprouting angiogenesis"/>
    <property type="evidence" value="ECO:0007669"/>
    <property type="project" value="TreeGrafter"/>
</dbReference>
<dbReference type="GO" id="GO:0048010">
    <property type="term" value="P:vascular endothelial growth factor receptor signaling pathway"/>
    <property type="evidence" value="ECO:0007669"/>
    <property type="project" value="TreeGrafter"/>
</dbReference>
<dbReference type="GO" id="GO:0038084">
    <property type="term" value="P:vascular endothelial growth factor signaling pathway"/>
    <property type="evidence" value="ECO:0007669"/>
    <property type="project" value="TreeGrafter"/>
</dbReference>
<dbReference type="CDD" id="cd00135">
    <property type="entry name" value="PDGF"/>
    <property type="match status" value="1"/>
</dbReference>
<dbReference type="FunFam" id="2.10.90.10:FF:000030">
    <property type="entry name" value="Vascular endothelial growth factor B"/>
    <property type="match status" value="1"/>
</dbReference>
<dbReference type="Gene3D" id="2.10.90.10">
    <property type="entry name" value="Cystine-knot cytokines"/>
    <property type="match status" value="1"/>
</dbReference>
<dbReference type="InterPro" id="IPR029034">
    <property type="entry name" value="Cystine-knot_cytokine"/>
</dbReference>
<dbReference type="InterPro" id="IPR023581">
    <property type="entry name" value="PD_growth_factor_CS"/>
</dbReference>
<dbReference type="InterPro" id="IPR000072">
    <property type="entry name" value="PDGF/VEGF_dom"/>
</dbReference>
<dbReference type="InterPro" id="IPR050507">
    <property type="entry name" value="PDGF/VEGF_growth_factor"/>
</dbReference>
<dbReference type="PANTHER" id="PTHR12025">
    <property type="entry name" value="VASCULAR ENDOTHELIAL GROWTH FACTOR"/>
    <property type="match status" value="1"/>
</dbReference>
<dbReference type="PANTHER" id="PTHR12025:SF5">
    <property type="entry name" value="VASCULAR ENDOTHELIAL GROWTH FACTOR A, LONG FORM"/>
    <property type="match status" value="1"/>
</dbReference>
<dbReference type="Pfam" id="PF00341">
    <property type="entry name" value="PDGF"/>
    <property type="match status" value="1"/>
</dbReference>
<dbReference type="SMART" id="SM00141">
    <property type="entry name" value="PDGF"/>
    <property type="match status" value="1"/>
</dbReference>
<dbReference type="SUPFAM" id="SSF57501">
    <property type="entry name" value="Cystine-knot cytokines"/>
    <property type="match status" value="1"/>
</dbReference>
<dbReference type="PROSITE" id="PS00249">
    <property type="entry name" value="PDGF_1"/>
    <property type="match status" value="1"/>
</dbReference>
<dbReference type="PROSITE" id="PS50278">
    <property type="entry name" value="PDGF_2"/>
    <property type="match status" value="1"/>
</dbReference>
<keyword id="KW-1015">Disulfide bond</keyword>
<keyword id="KW-0339">Growth factor</keyword>
<keyword id="KW-0873">Pyrrolidone carboxylic acid</keyword>
<keyword id="KW-0964">Secreted</keyword>
<keyword id="KW-0732">Signal</keyword>
<keyword id="KW-0800">Toxin</keyword>
<evidence type="ECO:0000250" key="1">
    <source>
        <dbReference type="UniProtKB" id="P67863"/>
    </source>
</evidence>
<evidence type="ECO:0000250" key="2">
    <source>
        <dbReference type="UniProtKB" id="P83942"/>
    </source>
</evidence>
<evidence type="ECO:0000255" key="3"/>
<evidence type="ECO:0000256" key="4">
    <source>
        <dbReference type="SAM" id="MobiDB-lite"/>
    </source>
</evidence>
<evidence type="ECO:0000269" key="5">
    <source>
    </source>
</evidence>
<evidence type="ECO:0000303" key="6">
    <source>
    </source>
</evidence>
<evidence type="ECO:0000305" key="7"/>
<evidence type="ECO:0000305" key="8">
    <source>
    </source>
</evidence>
<comment type="function">
    <text evidence="5">Snake venom VEGFs may contribute to venom dispersion and prey subjugation by inducing vascular permeability and hypotension. This protein strongly increases vascular permeability, and weakly stimulates angiogenesis. Interacts with VEGF receptor-1 (FLT1) with a high affinity, whereas it binds to VEGF receptor-2 (KDR) with a low affinity. Stimulates autophosphorylation of VEGF receptor-1 (VEGFR-1/FLT1), and VEGF receptor-2 (VEGFR-2/KDR).</text>
</comment>
<comment type="subunit">
    <text evidence="5">Homodimer; disulfide-linked. Interacts with VEGF receptor-1 (FLT1) with a high affinity, whereas it binds to VEGF receptor-2 (KDR) with a low affinity. Does not bind VEGF receptor-3 (FLT4).</text>
</comment>
<comment type="subcellular location">
    <subcellularLocation>
        <location evidence="5">Secreted</location>
    </subcellularLocation>
</comment>
<comment type="tissue specificity">
    <text evidence="8">Expressed by the venom gland.</text>
</comment>
<comment type="miscellaneous">
    <text>IC(50) to VEGF receptor-1 is 30 ng/ml and IC(50) to VEGF receptor-2 is 254 ng/ml.</text>
</comment>
<comment type="similarity">
    <text evidence="7">Belongs to the PDGF/VEGF growth factor family. Snake venom VEGF subfamily.</text>
</comment>
<accession>P67862</accession>
<accession>C0K3N6</accession>
<accession>Q68BI5</accession>
<accession>T2HPC7</accession>